<dbReference type="EC" id="2.5.1.141" evidence="1"/>
<dbReference type="EMBL" id="AM711867">
    <property type="protein sequence ID" value="CAN01789.1"/>
    <property type="molecule type" value="Genomic_DNA"/>
</dbReference>
<dbReference type="RefSeq" id="WP_012038421.1">
    <property type="nucleotide sequence ID" value="NC_009480.1"/>
</dbReference>
<dbReference type="SMR" id="A5CRS6"/>
<dbReference type="KEGG" id="cmi:CMM_1733"/>
<dbReference type="eggNOG" id="COG0109">
    <property type="taxonomic scope" value="Bacteria"/>
</dbReference>
<dbReference type="HOGENOM" id="CLU_029631_0_1_11"/>
<dbReference type="OrthoDB" id="9814417at2"/>
<dbReference type="UniPathway" id="UPA00834">
    <property type="reaction ID" value="UER00712"/>
</dbReference>
<dbReference type="Proteomes" id="UP000001564">
    <property type="component" value="Chromosome"/>
</dbReference>
<dbReference type="GO" id="GO:0005886">
    <property type="term" value="C:plasma membrane"/>
    <property type="evidence" value="ECO:0007669"/>
    <property type="project" value="UniProtKB-SubCell"/>
</dbReference>
<dbReference type="GO" id="GO:0008495">
    <property type="term" value="F:protoheme IX farnesyltransferase activity"/>
    <property type="evidence" value="ECO:0007669"/>
    <property type="project" value="UniProtKB-UniRule"/>
</dbReference>
<dbReference type="GO" id="GO:0048034">
    <property type="term" value="P:heme O biosynthetic process"/>
    <property type="evidence" value="ECO:0007669"/>
    <property type="project" value="UniProtKB-UniRule"/>
</dbReference>
<dbReference type="CDD" id="cd13957">
    <property type="entry name" value="PT_UbiA_Cox10"/>
    <property type="match status" value="1"/>
</dbReference>
<dbReference type="FunFam" id="1.10.357.140:FF:000001">
    <property type="entry name" value="Protoheme IX farnesyltransferase"/>
    <property type="match status" value="1"/>
</dbReference>
<dbReference type="Gene3D" id="1.10.357.140">
    <property type="entry name" value="UbiA prenyltransferase"/>
    <property type="match status" value="1"/>
</dbReference>
<dbReference type="HAMAP" id="MF_00154">
    <property type="entry name" value="CyoE_CtaB"/>
    <property type="match status" value="1"/>
</dbReference>
<dbReference type="InterPro" id="IPR006369">
    <property type="entry name" value="Protohaem_IX_farnesylTrfase"/>
</dbReference>
<dbReference type="InterPro" id="IPR000537">
    <property type="entry name" value="UbiA_prenyltransferase"/>
</dbReference>
<dbReference type="InterPro" id="IPR030470">
    <property type="entry name" value="UbiA_prenylTrfase_CS"/>
</dbReference>
<dbReference type="InterPro" id="IPR044878">
    <property type="entry name" value="UbiA_sf"/>
</dbReference>
<dbReference type="NCBIfam" id="TIGR01473">
    <property type="entry name" value="cyoE_ctaB"/>
    <property type="match status" value="1"/>
</dbReference>
<dbReference type="NCBIfam" id="NF003349">
    <property type="entry name" value="PRK04375.1-2"/>
    <property type="match status" value="1"/>
</dbReference>
<dbReference type="PANTHER" id="PTHR43448:SF7">
    <property type="entry name" value="4-HYDROXYBENZOATE SOLANESYLTRANSFERASE"/>
    <property type="match status" value="1"/>
</dbReference>
<dbReference type="PANTHER" id="PTHR43448">
    <property type="entry name" value="PROTOHEME IX FARNESYLTRANSFERASE, MITOCHONDRIAL"/>
    <property type="match status" value="1"/>
</dbReference>
<dbReference type="Pfam" id="PF01040">
    <property type="entry name" value="UbiA"/>
    <property type="match status" value="1"/>
</dbReference>
<dbReference type="PROSITE" id="PS00943">
    <property type="entry name" value="UBIA"/>
    <property type="match status" value="1"/>
</dbReference>
<proteinExistence type="inferred from homology"/>
<accession>A5CRS6</accession>
<evidence type="ECO:0000255" key="1">
    <source>
        <dbReference type="HAMAP-Rule" id="MF_00154"/>
    </source>
</evidence>
<keyword id="KW-1003">Cell membrane</keyword>
<keyword id="KW-0350">Heme biosynthesis</keyword>
<keyword id="KW-0472">Membrane</keyword>
<keyword id="KW-0808">Transferase</keyword>
<keyword id="KW-0812">Transmembrane</keyword>
<keyword id="KW-1133">Transmembrane helix</keyword>
<name>COXX_CLAM3</name>
<feature type="chain" id="PRO_0000327039" description="Protoheme IX farnesyltransferase">
    <location>
        <begin position="1"/>
        <end position="306"/>
    </location>
</feature>
<feature type="transmembrane region" description="Helical" evidence="1">
    <location>
        <begin position="31"/>
        <end position="50"/>
    </location>
</feature>
<feature type="transmembrane region" description="Helical" evidence="1">
    <location>
        <begin position="55"/>
        <end position="77"/>
    </location>
</feature>
<feature type="transmembrane region" description="Helical" evidence="1">
    <location>
        <begin position="104"/>
        <end position="124"/>
    </location>
</feature>
<feature type="transmembrane region" description="Helical" evidence="1">
    <location>
        <begin position="125"/>
        <end position="145"/>
    </location>
</feature>
<feature type="transmembrane region" description="Helical" evidence="1">
    <location>
        <begin position="168"/>
        <end position="188"/>
    </location>
</feature>
<feature type="transmembrane region" description="Helical" evidence="1">
    <location>
        <begin position="218"/>
        <end position="235"/>
    </location>
</feature>
<feature type="transmembrane region" description="Helical" evidence="1">
    <location>
        <begin position="238"/>
        <end position="258"/>
    </location>
</feature>
<feature type="transmembrane region" description="Helical" evidence="1">
    <location>
        <begin position="286"/>
        <end position="306"/>
    </location>
</feature>
<comment type="function">
    <text evidence="1">Converts heme B (protoheme IX) to heme O by substitution of the vinyl group on carbon 2 of heme B porphyrin ring with a hydroxyethyl farnesyl side group.</text>
</comment>
<comment type="catalytic activity">
    <reaction evidence="1">
        <text>heme b + (2E,6E)-farnesyl diphosphate + H2O = Fe(II)-heme o + diphosphate</text>
        <dbReference type="Rhea" id="RHEA:28070"/>
        <dbReference type="ChEBI" id="CHEBI:15377"/>
        <dbReference type="ChEBI" id="CHEBI:33019"/>
        <dbReference type="ChEBI" id="CHEBI:60344"/>
        <dbReference type="ChEBI" id="CHEBI:60530"/>
        <dbReference type="ChEBI" id="CHEBI:175763"/>
        <dbReference type="EC" id="2.5.1.141"/>
    </reaction>
</comment>
<comment type="pathway">
    <text evidence="1">Porphyrin-containing compound metabolism; heme O biosynthesis; heme O from protoheme: step 1/1.</text>
</comment>
<comment type="subcellular location">
    <subcellularLocation>
        <location evidence="1">Cell membrane</location>
        <topology evidence="1">Multi-pass membrane protein</topology>
    </subcellularLocation>
</comment>
<comment type="miscellaneous">
    <text evidence="1">Carbon 2 of the heme B porphyrin ring is defined according to the Fischer nomenclature.</text>
</comment>
<comment type="similarity">
    <text evidence="1">Belongs to the UbiA prenyltransferase family. Protoheme IX farnesyltransferase subfamily.</text>
</comment>
<gene>
    <name evidence="1" type="primary">ctaB</name>
    <name type="ordered locus">CMM_1733</name>
</gene>
<reference key="1">
    <citation type="journal article" date="2008" name="J. Bacteriol.">
        <title>The genome sequence of the tomato-pathogenic actinomycete Clavibacter michiganensis subsp. michiganensis NCPPB382 reveals a large island involved in pathogenicity.</title>
        <authorList>
            <person name="Gartemann K.-H."/>
            <person name="Abt B."/>
            <person name="Bekel T."/>
            <person name="Burger A."/>
            <person name="Engemann J."/>
            <person name="Fluegel M."/>
            <person name="Gaigalat L."/>
            <person name="Goesmann A."/>
            <person name="Graefen I."/>
            <person name="Kalinowski J."/>
            <person name="Kaup O."/>
            <person name="Kirchner O."/>
            <person name="Krause L."/>
            <person name="Linke B."/>
            <person name="McHardy A."/>
            <person name="Meyer F."/>
            <person name="Pohle S."/>
            <person name="Rueckert C."/>
            <person name="Schneiker S."/>
            <person name="Zellermann E.-M."/>
            <person name="Puehler A."/>
            <person name="Eichenlaub R."/>
            <person name="Kaiser O."/>
            <person name="Bartels D."/>
        </authorList>
    </citation>
    <scope>NUCLEOTIDE SEQUENCE [LARGE SCALE GENOMIC DNA]</scope>
    <source>
        <strain>NCPPB 382</strain>
    </source>
</reference>
<protein>
    <recommendedName>
        <fullName evidence="1">Protoheme IX farnesyltransferase</fullName>
        <ecNumber evidence="1">2.5.1.141</ecNumber>
    </recommendedName>
    <alternativeName>
        <fullName evidence="1">Heme B farnesyltransferase</fullName>
    </alternativeName>
    <alternativeName>
        <fullName evidence="1">Heme O synthase</fullName>
    </alternativeName>
</protein>
<sequence>MNVAVQSRVDRETIGVARKTKAYVALTKPRVIELLLVTTAPVMILAQGGWPNPWLILGVLVGGTLSAGSANAFNCYIDRDIDRVMKRTQRRPLVTGELTDREALVFAWIIGVASIVWLGVISNWLAAALSLAAILFYVFVYTLWLKRRTPQNIVWGGAAGCMPVLIGWAAVTGDISWAPVILFMIVFLWTPPHYWPLSMKYRDDYASVNVPMLAVVRGRAAVGLQTILYAWATLACSLLLIPVAGMGLVYTLAALAGGGWFVYETHRLYDLAVRHEPIKPMRVFHASISYLSLLFLAVGIDPLLPF</sequence>
<organism>
    <name type="scientific">Clavibacter michiganensis subsp. michiganensis (strain NCPPB 382)</name>
    <dbReference type="NCBI Taxonomy" id="443906"/>
    <lineage>
        <taxon>Bacteria</taxon>
        <taxon>Bacillati</taxon>
        <taxon>Actinomycetota</taxon>
        <taxon>Actinomycetes</taxon>
        <taxon>Micrococcales</taxon>
        <taxon>Microbacteriaceae</taxon>
        <taxon>Clavibacter</taxon>
    </lineage>
</organism>